<proteinExistence type="inferred from homology"/>
<organism>
    <name type="scientific">Azorhizobium caulinodans (strain ATCC 43989 / DSM 5975 / JCM 20966 / LMG 6465 / NBRC 14845 / NCIMB 13405 / ORS 571)</name>
    <dbReference type="NCBI Taxonomy" id="438753"/>
    <lineage>
        <taxon>Bacteria</taxon>
        <taxon>Pseudomonadati</taxon>
        <taxon>Pseudomonadota</taxon>
        <taxon>Alphaproteobacteria</taxon>
        <taxon>Hyphomicrobiales</taxon>
        <taxon>Xanthobacteraceae</taxon>
        <taxon>Azorhizobium</taxon>
    </lineage>
</organism>
<evidence type="ECO:0000255" key="1">
    <source>
        <dbReference type="HAMAP-Rule" id="MF_00169"/>
    </source>
</evidence>
<dbReference type="EC" id="4.2.1.10" evidence="1"/>
<dbReference type="EMBL" id="AP009384">
    <property type="protein sequence ID" value="BAF89071.1"/>
    <property type="molecule type" value="Genomic_DNA"/>
</dbReference>
<dbReference type="RefSeq" id="WP_012171597.1">
    <property type="nucleotide sequence ID" value="NC_009937.1"/>
</dbReference>
<dbReference type="SMR" id="A8IBI0"/>
<dbReference type="STRING" id="438753.AZC_3073"/>
<dbReference type="KEGG" id="azc:AZC_3073"/>
<dbReference type="eggNOG" id="COG0757">
    <property type="taxonomic scope" value="Bacteria"/>
</dbReference>
<dbReference type="HOGENOM" id="CLU_090968_2_0_5"/>
<dbReference type="UniPathway" id="UPA00053">
    <property type="reaction ID" value="UER00086"/>
</dbReference>
<dbReference type="Proteomes" id="UP000000270">
    <property type="component" value="Chromosome"/>
</dbReference>
<dbReference type="GO" id="GO:0003855">
    <property type="term" value="F:3-dehydroquinate dehydratase activity"/>
    <property type="evidence" value="ECO:0007669"/>
    <property type="project" value="UniProtKB-UniRule"/>
</dbReference>
<dbReference type="GO" id="GO:0008652">
    <property type="term" value="P:amino acid biosynthetic process"/>
    <property type="evidence" value="ECO:0007669"/>
    <property type="project" value="UniProtKB-KW"/>
</dbReference>
<dbReference type="GO" id="GO:0009073">
    <property type="term" value="P:aromatic amino acid family biosynthetic process"/>
    <property type="evidence" value="ECO:0007669"/>
    <property type="project" value="UniProtKB-KW"/>
</dbReference>
<dbReference type="GO" id="GO:0009423">
    <property type="term" value="P:chorismate biosynthetic process"/>
    <property type="evidence" value="ECO:0007669"/>
    <property type="project" value="UniProtKB-UniRule"/>
</dbReference>
<dbReference type="GO" id="GO:0019631">
    <property type="term" value="P:quinate catabolic process"/>
    <property type="evidence" value="ECO:0007669"/>
    <property type="project" value="TreeGrafter"/>
</dbReference>
<dbReference type="CDD" id="cd00466">
    <property type="entry name" value="DHQase_II"/>
    <property type="match status" value="1"/>
</dbReference>
<dbReference type="Gene3D" id="3.40.50.9100">
    <property type="entry name" value="Dehydroquinase, class II"/>
    <property type="match status" value="1"/>
</dbReference>
<dbReference type="HAMAP" id="MF_00169">
    <property type="entry name" value="AroQ"/>
    <property type="match status" value="1"/>
</dbReference>
<dbReference type="InterPro" id="IPR001874">
    <property type="entry name" value="DHquinase_II"/>
</dbReference>
<dbReference type="InterPro" id="IPR018509">
    <property type="entry name" value="DHquinase_II_CS"/>
</dbReference>
<dbReference type="InterPro" id="IPR036441">
    <property type="entry name" value="DHquinase_II_sf"/>
</dbReference>
<dbReference type="NCBIfam" id="TIGR01088">
    <property type="entry name" value="aroQ"/>
    <property type="match status" value="1"/>
</dbReference>
<dbReference type="NCBIfam" id="NF003805">
    <property type="entry name" value="PRK05395.1-2"/>
    <property type="match status" value="1"/>
</dbReference>
<dbReference type="NCBIfam" id="NF003806">
    <property type="entry name" value="PRK05395.1-3"/>
    <property type="match status" value="1"/>
</dbReference>
<dbReference type="NCBIfam" id="NF003807">
    <property type="entry name" value="PRK05395.1-4"/>
    <property type="match status" value="1"/>
</dbReference>
<dbReference type="PANTHER" id="PTHR21272">
    <property type="entry name" value="CATABOLIC 3-DEHYDROQUINASE"/>
    <property type="match status" value="1"/>
</dbReference>
<dbReference type="PANTHER" id="PTHR21272:SF3">
    <property type="entry name" value="CATABOLIC 3-DEHYDROQUINASE"/>
    <property type="match status" value="1"/>
</dbReference>
<dbReference type="Pfam" id="PF01220">
    <property type="entry name" value="DHquinase_II"/>
    <property type="match status" value="1"/>
</dbReference>
<dbReference type="PIRSF" id="PIRSF001399">
    <property type="entry name" value="DHquinase_II"/>
    <property type="match status" value="1"/>
</dbReference>
<dbReference type="SUPFAM" id="SSF52304">
    <property type="entry name" value="Type II 3-dehydroquinate dehydratase"/>
    <property type="match status" value="1"/>
</dbReference>
<dbReference type="PROSITE" id="PS01029">
    <property type="entry name" value="DEHYDROQUINASE_II"/>
    <property type="match status" value="1"/>
</dbReference>
<sequence length="147" mass="15451">MSDTIHVLNGPNLNLLGTREPGIYGAATLADVEALCRTTAAQHGLELVFRQSNHEGDLVDWIQAAAGSVGVVLNAGAYTHTSVALRDAIAGTGVPAVEVHLSNVFAREPFRHHSYLSPVVRGVICGFGPQSYVLGITALATTRPARP</sequence>
<comment type="function">
    <text evidence="1">Catalyzes a trans-dehydration via an enolate intermediate.</text>
</comment>
<comment type="catalytic activity">
    <reaction evidence="1">
        <text>3-dehydroquinate = 3-dehydroshikimate + H2O</text>
        <dbReference type="Rhea" id="RHEA:21096"/>
        <dbReference type="ChEBI" id="CHEBI:15377"/>
        <dbReference type="ChEBI" id="CHEBI:16630"/>
        <dbReference type="ChEBI" id="CHEBI:32364"/>
        <dbReference type="EC" id="4.2.1.10"/>
    </reaction>
</comment>
<comment type="pathway">
    <text evidence="1">Metabolic intermediate biosynthesis; chorismate biosynthesis; chorismate from D-erythrose 4-phosphate and phosphoenolpyruvate: step 3/7.</text>
</comment>
<comment type="subunit">
    <text evidence="1">Homododecamer.</text>
</comment>
<comment type="similarity">
    <text evidence="1">Belongs to the type-II 3-dehydroquinase family.</text>
</comment>
<keyword id="KW-0028">Amino-acid biosynthesis</keyword>
<keyword id="KW-0057">Aromatic amino acid biosynthesis</keyword>
<keyword id="KW-0456">Lyase</keyword>
<keyword id="KW-1185">Reference proteome</keyword>
<gene>
    <name evidence="1" type="primary">aroQ</name>
    <name type="ordered locus">AZC_3073</name>
</gene>
<accession>A8IBI0</accession>
<name>AROQ_AZOC5</name>
<feature type="chain" id="PRO_1000071577" description="3-dehydroquinate dehydratase">
    <location>
        <begin position="1"/>
        <end position="147"/>
    </location>
</feature>
<feature type="active site" description="Proton acceptor" evidence="1">
    <location>
        <position position="24"/>
    </location>
</feature>
<feature type="active site" description="Proton donor" evidence="1">
    <location>
        <position position="100"/>
    </location>
</feature>
<feature type="binding site" evidence="1">
    <location>
        <position position="74"/>
    </location>
    <ligand>
        <name>substrate</name>
    </ligand>
</feature>
<feature type="binding site" evidence="1">
    <location>
        <position position="80"/>
    </location>
    <ligand>
        <name>substrate</name>
    </ligand>
</feature>
<feature type="binding site" evidence="1">
    <location>
        <position position="87"/>
    </location>
    <ligand>
        <name>substrate</name>
    </ligand>
</feature>
<feature type="binding site" evidence="1">
    <location>
        <begin position="101"/>
        <end position="102"/>
    </location>
    <ligand>
        <name>substrate</name>
    </ligand>
</feature>
<feature type="binding site" evidence="1">
    <location>
        <position position="111"/>
    </location>
    <ligand>
        <name>substrate</name>
    </ligand>
</feature>
<feature type="site" description="Transition state stabilizer" evidence="1">
    <location>
        <position position="19"/>
    </location>
</feature>
<protein>
    <recommendedName>
        <fullName evidence="1">3-dehydroquinate dehydratase</fullName>
        <shortName evidence="1">3-dehydroquinase</shortName>
        <ecNumber evidence="1">4.2.1.10</ecNumber>
    </recommendedName>
    <alternativeName>
        <fullName evidence="1">Type II DHQase</fullName>
    </alternativeName>
</protein>
<reference key="1">
    <citation type="submission" date="2007-04" db="EMBL/GenBank/DDBJ databases">
        <title>Complete genome sequence of the nitrogen-fixing bacterium Azorhizobium caulinodans ORS571.</title>
        <authorList>
            <person name="Lee K.B."/>
            <person name="Backer P.D."/>
            <person name="Aono T."/>
            <person name="Liu C.T."/>
            <person name="Suzuki S."/>
            <person name="Suzuki T."/>
            <person name="Kaneko T."/>
            <person name="Yamada M."/>
            <person name="Tabata S."/>
            <person name="Kupfer D.M."/>
            <person name="Najar F.Z."/>
            <person name="Wiley G.B."/>
            <person name="Roe B."/>
            <person name="Binnewies T."/>
            <person name="Ussery D."/>
            <person name="Vereecke D."/>
            <person name="Gevers D."/>
            <person name="Holsters M."/>
            <person name="Oyaizu H."/>
        </authorList>
    </citation>
    <scope>NUCLEOTIDE SEQUENCE [LARGE SCALE GENOMIC DNA]</scope>
    <source>
        <strain>ATCC 43989 / DSM 5975 / JCM 20966 / LMG 6465 / NBRC 14845 / NCIMB 13405 / ORS 571</strain>
    </source>
</reference>